<sequence length="57" mass="6555">MALFSKILIFYVIGVNISFVIIWFISHEKTHIRLLSAFLVGITWPMSLPVALLFSLF</sequence>
<name>GHOT_ECOLI</name>
<protein>
    <recommendedName>
        <fullName evidence="5">Toxin GhoT</fullName>
    </recommendedName>
</protein>
<evidence type="ECO:0000255" key="1"/>
<evidence type="ECO:0000269" key="2">
    <source>
    </source>
</evidence>
<evidence type="ECO:0000269" key="3">
    <source>
    </source>
</evidence>
<evidence type="ECO:0000269" key="4">
    <source>
    </source>
</evidence>
<evidence type="ECO:0000303" key="5">
    <source>
    </source>
</evidence>
<evidence type="ECO:0000305" key="6"/>
<evidence type="ECO:0000305" key="7">
    <source>
    </source>
</evidence>
<reference key="1">
    <citation type="journal article" date="1997" name="Science">
        <title>The complete genome sequence of Escherichia coli K-12.</title>
        <authorList>
            <person name="Blattner F.R."/>
            <person name="Plunkett G. III"/>
            <person name="Bloch C.A."/>
            <person name="Perna N.T."/>
            <person name="Burland V."/>
            <person name="Riley M."/>
            <person name="Collado-Vides J."/>
            <person name="Glasner J.D."/>
            <person name="Rode C.K."/>
            <person name="Mayhew G.F."/>
            <person name="Gregor J."/>
            <person name="Davis N.W."/>
            <person name="Kirkpatrick H.A."/>
            <person name="Goeden M.A."/>
            <person name="Rose D.J."/>
            <person name="Mau B."/>
            <person name="Shao Y."/>
        </authorList>
    </citation>
    <scope>NUCLEOTIDE SEQUENCE [LARGE SCALE GENOMIC DNA]</scope>
    <source>
        <strain>K12 / MG1655 / ATCC 47076</strain>
    </source>
</reference>
<reference key="2">
    <citation type="journal article" date="2006" name="Mol. Syst. Biol.">
        <title>Highly accurate genome sequences of Escherichia coli K-12 strains MG1655 and W3110.</title>
        <authorList>
            <person name="Hayashi K."/>
            <person name="Morooka N."/>
            <person name="Yamamoto Y."/>
            <person name="Fujita K."/>
            <person name="Isono K."/>
            <person name="Choi S."/>
            <person name="Ohtsubo E."/>
            <person name="Baba T."/>
            <person name="Wanner B.L."/>
            <person name="Mori H."/>
            <person name="Horiuchi T."/>
        </authorList>
    </citation>
    <scope>NUCLEOTIDE SEQUENCE [LARGE SCALE GENOMIC DNA]</scope>
    <source>
        <strain>K12 / W3110 / ATCC 27325 / DSM 5911</strain>
    </source>
</reference>
<reference key="3">
    <citation type="journal article" date="2012" name="Nat. Chem. Biol.">
        <title>A new type V toxin-antitoxin system where mRNA for toxin GhoT is cleaved by antitoxin GhoS.</title>
        <authorList>
            <person name="Wang X."/>
            <person name="Lord D.M."/>
            <person name="Cheng H.Y."/>
            <person name="Osbourne D.O."/>
            <person name="Hong S.H."/>
            <person name="Sanchez-Torres V."/>
            <person name="Quiroga C."/>
            <person name="Zheng K."/>
            <person name="Herrmann T."/>
            <person name="Peti W."/>
            <person name="Benedik M.J."/>
            <person name="Page R."/>
            <person name="Wood T.K."/>
        </authorList>
    </citation>
    <scope>FUNCTION</scope>
    <scope>INDUCTION</scope>
    <scope>DISRUPTION PHENOTYPE</scope>
    <source>
        <strain>K12 / BW25113</strain>
    </source>
</reference>
<reference key="4">
    <citation type="journal article" date="2013" name="Environ. Microbiol.">
        <title>Type II toxin/antitoxin MqsR/MqsA controls type V toxin/antitoxin GhoT/GhoS.</title>
        <authorList>
            <person name="Wang X."/>
            <person name="Lord D.M."/>
            <person name="Hong S.H."/>
            <person name="Peti W."/>
            <person name="Benedik M.J."/>
            <person name="Page R."/>
            <person name="Wood T.K."/>
        </authorList>
    </citation>
    <scope>INDUCTION</scope>
    <scope>DISRUPTION PHENOTYPE</scope>
    <source>
        <strain>K12 / BW25113</strain>
    </source>
</reference>
<reference key="5">
    <citation type="journal article" date="2014" name="Environ. Microbiol.">
        <title>Toxin GhoT of the GhoT/GhoS toxin/antitoxin system damages the cell membrane to reduce adenosine triphosphate and to reduce growth under stress.</title>
        <authorList>
            <person name="Cheng H.Y."/>
            <person name="Soo V.W."/>
            <person name="Islam S."/>
            <person name="McAnulty M.J."/>
            <person name="Benedik M.J."/>
            <person name="Wood T.K."/>
        </authorList>
    </citation>
    <scope>FUNCTION</scope>
    <scope>SUBCELLULAR LOCATION</scope>
    <scope>DISRUPTION PHENOTYPE</scope>
    <scope>MUTAGENESIS OF MET-1; ILE-21 AND PHE-38</scope>
</reference>
<gene>
    <name evidence="5" type="primary">ghoT</name>
    <name type="synonym">yjdO</name>
    <name type="ordered locus">b4559</name>
    <name type="ordered locus">JW5732</name>
</gene>
<keyword id="KW-0997">Cell inner membrane</keyword>
<keyword id="KW-1003">Cell membrane</keyword>
<keyword id="KW-0472">Membrane</keyword>
<keyword id="KW-1185">Reference proteome</keyword>
<keyword id="KW-1277">Toxin-antitoxin system</keyword>
<keyword id="KW-0812">Transmembrane</keyword>
<keyword id="KW-1133">Transmembrane helix</keyword>
<feature type="chain" id="PRO_0000169735" description="Toxin GhoT">
    <location>
        <begin position="1"/>
        <end position="57"/>
    </location>
</feature>
<feature type="transmembrane region" description="Helical" evidence="1">
    <location>
        <begin position="7"/>
        <end position="27"/>
    </location>
</feature>
<feature type="transmembrane region" description="Helical" evidence="1">
    <location>
        <begin position="37"/>
        <end position="57"/>
    </location>
</feature>
<feature type="mutagenesis site" description="Not toxic in a disrupted ghoS strain as no protein produced." evidence="4">
    <original>M</original>
    <variation>T</variation>
    <location>
        <position position="1"/>
    </location>
</feature>
<feature type="mutagenesis site" description="Protein remains toxic." evidence="4">
    <original>I</original>
    <variation>R</variation>
    <location>
        <position position="21"/>
    </location>
</feature>
<feature type="mutagenesis site" description="Not toxic, protein still targeted to cell pole. No change in intracellular ATP levels, no dissipation of the membrane potential." evidence="4">
    <original>F</original>
    <variation>R</variation>
    <location>
        <position position="38"/>
    </location>
</feature>
<proteinExistence type="evidence at protein level"/>
<comment type="function">
    <text evidence="2 4">Toxic component of a type V toxin-antitoxin (TA) system. Causes membrane damage when induced by MqsR, slowing cell growth and increasing the formation of dormant persister cells; involved with GhoS, its antitoxin, in reducing cell growth during antibacterial stress (PubMed:24373067). Overexpression causes cell lysis, forming ghost cells; both effects are neutralized by expression of GhoS. Overexpression in the presence of ampicillin increases persister cell formation (persister cells exhibit antibiotic tolerance without genetic change) (PubMed:22941047). Overexpression causes about 90-fold reduction in cellular ATP levels and dissipates the membrane potential (PubMed:24373067).</text>
</comment>
<comment type="subcellular location">
    <subcellularLocation>
        <location evidence="7">Cell inner membrane</location>
        <topology evidence="6">Multi-pass membrane protein</topology>
    </subcellularLocation>
    <text evidence="4">Localizes to the cell pole.</text>
</comment>
<comment type="induction">
    <text evidence="2 3">Expression controlled by its antitoxin GhoS, which digests ghoT transcripts in a sequence-specific manner (PubMed:22941047). Post-transcriptionally regulated by MqsR which acts on the ghoST transcript selectively, degrading the ghoS segment while leaving ghoT intact; conditions which induce MqsR (e.g. overexpression, nalidixic acid, azolocillin or H(2)O(2)) decrease ghoS expression and thus increase ghoT transcripts (PubMed:23289863).</text>
</comment>
<comment type="disruption phenotype">
    <text evidence="2 3 4">No visible effect in the absence of stress (PubMed:24373067). Reduces MqsR-mediated persistence (overexpression of MqsR increases persister cell formation). Decreased biofilm formation after 8 hours at 30 and 37 degrees Celsius, biofilm production has risen by 24 hours. Slight decrease in swimming motility (PubMed:22941047). Cells grown in 20 ug/ml ampicillin in the absence of ghoT and which overexpress MqsR elongate, suggesting MqsR inhibits cell elongation via ghoT (PubMed:23289863). When single mutant is grown in the presence of antibiotics carbenicillin or cefoxitin initial metabolism is significantly increased over that of wild-type, after 14 hours wild-type is slightly less active. In a double ghoS-ghoT mutant in presence of the 2 antibiotics metabolism is significantly increased over that of wild-type, but by 9 hours wild-type has caught up and eventually has slightly greater metabolic rates (PubMed:24373067).</text>
</comment>
<comment type="similarity">
    <text evidence="6">Belongs to the GhoT/OrtT toxin family.</text>
</comment>
<organism>
    <name type="scientific">Escherichia coli (strain K12)</name>
    <dbReference type="NCBI Taxonomy" id="83333"/>
    <lineage>
        <taxon>Bacteria</taxon>
        <taxon>Pseudomonadati</taxon>
        <taxon>Pseudomonadota</taxon>
        <taxon>Gammaproteobacteria</taxon>
        <taxon>Enterobacterales</taxon>
        <taxon>Enterobacteriaceae</taxon>
        <taxon>Escherichia</taxon>
    </lineage>
</organism>
<dbReference type="EMBL" id="U00096">
    <property type="protein sequence ID" value="ABD18711.1"/>
    <property type="molecule type" value="Genomic_DNA"/>
</dbReference>
<dbReference type="EMBL" id="AP009048">
    <property type="protein sequence ID" value="BAE78131.1"/>
    <property type="molecule type" value="Genomic_DNA"/>
</dbReference>
<dbReference type="RefSeq" id="WP_001173343.1">
    <property type="nucleotide sequence ID" value="NZ_STEB01000014.1"/>
</dbReference>
<dbReference type="RefSeq" id="YP_588474.1">
    <property type="nucleotide sequence ID" value="NC_000913.3"/>
</dbReference>
<dbReference type="BioGRID" id="4261768">
    <property type="interactions" value="10"/>
</dbReference>
<dbReference type="FunCoup" id="P64646">
    <property type="interactions" value="13"/>
</dbReference>
<dbReference type="STRING" id="511145.b4559"/>
<dbReference type="TCDB" id="1.C.130.1.2">
    <property type="family name" value="the membrane potential-dissipating orphan 10 toxin, (ortt) family"/>
</dbReference>
<dbReference type="PaxDb" id="511145-b4559"/>
<dbReference type="EnsemblBacteria" id="ABD18711">
    <property type="protein sequence ID" value="ABD18711"/>
    <property type="gene ID" value="b4559"/>
</dbReference>
<dbReference type="GeneID" id="1450308"/>
<dbReference type="GeneID" id="93777703"/>
<dbReference type="KEGG" id="ecj:JW5732"/>
<dbReference type="KEGG" id="eco:b4559"/>
<dbReference type="KEGG" id="ecoc:C3026_22315"/>
<dbReference type="PATRIC" id="fig|511145.12.peg.4260"/>
<dbReference type="HOGENOM" id="CLU_189012_0_0_6"/>
<dbReference type="InParanoid" id="P64646"/>
<dbReference type="OMA" id="MSTFECI"/>
<dbReference type="OrthoDB" id="6413705at2"/>
<dbReference type="PhylomeDB" id="P64646"/>
<dbReference type="BioCyc" id="EcoCyc:MONOMER0-2694"/>
<dbReference type="PRO" id="PR:P64646"/>
<dbReference type="Proteomes" id="UP000000625">
    <property type="component" value="Chromosome"/>
</dbReference>
<dbReference type="GO" id="GO:0060187">
    <property type="term" value="C:cell pole"/>
    <property type="evidence" value="ECO:0000314"/>
    <property type="project" value="EcoCyc"/>
</dbReference>
<dbReference type="GO" id="GO:0016020">
    <property type="term" value="C:membrane"/>
    <property type="evidence" value="ECO:0000314"/>
    <property type="project" value="EcoCyc"/>
</dbReference>
<dbReference type="GO" id="GO:0005886">
    <property type="term" value="C:plasma membrane"/>
    <property type="evidence" value="ECO:0007669"/>
    <property type="project" value="UniProtKB-SubCell"/>
</dbReference>
<dbReference type="InterPro" id="IPR019689">
    <property type="entry name" value="Toxin_GhoT/OrtT"/>
</dbReference>
<dbReference type="Pfam" id="PF10753">
    <property type="entry name" value="Toxin_GhoT_OrtT"/>
    <property type="match status" value="1"/>
</dbReference>
<accession>P64646</accession>
<accession>P58038</accession>
<accession>Q2EEU1</accession>
<accession>Q2M6H5</accession>